<feature type="chain" id="PRO_0000212993" description="Palmitoyltransferase SWF1">
    <location>
        <begin position="1"/>
        <end position="381"/>
    </location>
</feature>
<feature type="topological domain" description="Lumenal" evidence="2">
    <location>
        <begin position="1"/>
        <end position="4"/>
    </location>
</feature>
<feature type="transmembrane region" description="Helical" evidence="2">
    <location>
        <begin position="5"/>
        <end position="25"/>
    </location>
</feature>
<feature type="topological domain" description="Cytoplasmic" evidence="2">
    <location>
        <begin position="26"/>
        <end position="64"/>
    </location>
</feature>
<feature type="transmembrane region" description="Helical" evidence="2">
    <location>
        <begin position="65"/>
        <end position="85"/>
    </location>
</feature>
<feature type="topological domain" description="Lumenal" evidence="2">
    <location>
        <begin position="86"/>
        <end position="107"/>
    </location>
</feature>
<feature type="transmembrane region" description="Helical" evidence="2">
    <location>
        <begin position="108"/>
        <end position="128"/>
    </location>
</feature>
<feature type="topological domain" description="Cytoplasmic" evidence="2">
    <location>
        <begin position="129"/>
        <end position="201"/>
    </location>
</feature>
<feature type="transmembrane region" description="Helical" evidence="2">
    <location>
        <begin position="202"/>
        <end position="222"/>
    </location>
</feature>
<feature type="topological domain" description="Lumenal" evidence="2">
    <location>
        <begin position="223"/>
        <end position="257"/>
    </location>
</feature>
<feature type="transmembrane region" description="Helical" evidence="2">
    <location>
        <begin position="258"/>
        <end position="278"/>
    </location>
</feature>
<feature type="topological domain" description="Cytoplasmic" evidence="2">
    <location>
        <begin position="279"/>
        <end position="381"/>
    </location>
</feature>
<feature type="domain" description="DHHC" evidence="3">
    <location>
        <begin position="157"/>
        <end position="207"/>
    </location>
</feature>
<feature type="active site" description="S-palmitoyl cysteine intermediate" evidence="1">
    <location>
        <position position="187"/>
    </location>
</feature>
<proteinExistence type="inferred from homology"/>
<name>SWF1_YARLI</name>
<organism>
    <name type="scientific">Yarrowia lipolytica (strain CLIB 122 / E 150)</name>
    <name type="common">Yeast</name>
    <name type="synonym">Candida lipolytica</name>
    <dbReference type="NCBI Taxonomy" id="284591"/>
    <lineage>
        <taxon>Eukaryota</taxon>
        <taxon>Fungi</taxon>
        <taxon>Dikarya</taxon>
        <taxon>Ascomycota</taxon>
        <taxon>Saccharomycotina</taxon>
        <taxon>Dipodascomycetes</taxon>
        <taxon>Dipodascales</taxon>
        <taxon>Dipodascales incertae sedis</taxon>
        <taxon>Yarrowia</taxon>
    </lineage>
</organism>
<protein>
    <recommendedName>
        <fullName>Palmitoyltransferase SWF1</fullName>
        <ecNumber>2.3.1.225</ecNumber>
    </recommendedName>
</protein>
<sequence>MWLKIYLLSILAISVFTFVFLFGALPQFEDTAVWKFRKWLSNRPAAIRSWDSKYCGGRLSVVGDFCGSVVAPAAPWSVPILYCAFTTYMFSAYYEDLHPFIAENHWYYAWLAPVAYTILVVSFVLATFSDPGKITKQNHALLLNQFRFDNLMFLEDTECSTCKFTKPARSKHDRFTNKCVAKFDHYCLWINNTVGLYNYRWFLFFLLGNVWTLCWGALLAGLKMIVMVAAEYKDHPKPLPSIFSQWWQVMITNENKRVGIIFLLSVSTGALACAFTAMHFYYIYLGATTNETDKWGDIHAAISEGSVWMFQKPGFKLDRSILLQKDEEGRPNRSLTAEEREYVAQNGLALTLLTDHKPIVNIYDKGFLNNLKAVMFPNSAY</sequence>
<accession>Q6CG20</accession>
<evidence type="ECO:0000250" key="1"/>
<evidence type="ECO:0000255" key="2"/>
<evidence type="ECO:0000255" key="3">
    <source>
        <dbReference type="PROSITE-ProRule" id="PRU00067"/>
    </source>
</evidence>
<evidence type="ECO:0000305" key="4"/>
<keyword id="KW-0012">Acyltransferase</keyword>
<keyword id="KW-0256">Endoplasmic reticulum</keyword>
<keyword id="KW-0449">Lipoprotein</keyword>
<keyword id="KW-0472">Membrane</keyword>
<keyword id="KW-0564">Palmitate</keyword>
<keyword id="KW-1185">Reference proteome</keyword>
<keyword id="KW-0808">Transferase</keyword>
<keyword id="KW-0812">Transmembrane</keyword>
<keyword id="KW-1133">Transmembrane helix</keyword>
<dbReference type="EC" id="2.3.1.225"/>
<dbReference type="EMBL" id="CR382128">
    <property type="protein sequence ID" value="CAG82609.1"/>
    <property type="molecule type" value="Genomic_DNA"/>
</dbReference>
<dbReference type="RefSeq" id="XP_500392.1">
    <property type="nucleotide sequence ID" value="XM_500392.1"/>
</dbReference>
<dbReference type="FunCoup" id="Q6CG20">
    <property type="interactions" value="28"/>
</dbReference>
<dbReference type="STRING" id="284591.Q6CG20"/>
<dbReference type="EnsemblFungi" id="CAG82609">
    <property type="protein sequence ID" value="CAG82609"/>
    <property type="gene ID" value="YALI0_B01606g"/>
</dbReference>
<dbReference type="KEGG" id="yli:2906795"/>
<dbReference type="VEuPathDB" id="FungiDB:YALI0_B01606g"/>
<dbReference type="HOGENOM" id="CLU_042181_2_1_1"/>
<dbReference type="InParanoid" id="Q6CG20"/>
<dbReference type="OMA" id="HIYLIWA"/>
<dbReference type="OrthoDB" id="11002at4891"/>
<dbReference type="Proteomes" id="UP000001300">
    <property type="component" value="Chromosome B"/>
</dbReference>
<dbReference type="GO" id="GO:0005783">
    <property type="term" value="C:endoplasmic reticulum"/>
    <property type="evidence" value="ECO:0000318"/>
    <property type="project" value="GO_Central"/>
</dbReference>
<dbReference type="GO" id="GO:0005789">
    <property type="term" value="C:endoplasmic reticulum membrane"/>
    <property type="evidence" value="ECO:0007669"/>
    <property type="project" value="UniProtKB-SubCell"/>
</dbReference>
<dbReference type="GO" id="GO:0005794">
    <property type="term" value="C:Golgi apparatus"/>
    <property type="evidence" value="ECO:0000318"/>
    <property type="project" value="GO_Central"/>
</dbReference>
<dbReference type="GO" id="GO:0019706">
    <property type="term" value="F:protein-cysteine S-palmitoyltransferase activity"/>
    <property type="evidence" value="ECO:0000318"/>
    <property type="project" value="GO_Central"/>
</dbReference>
<dbReference type="GO" id="GO:0006612">
    <property type="term" value="P:protein targeting to membrane"/>
    <property type="evidence" value="ECO:0000318"/>
    <property type="project" value="GO_Central"/>
</dbReference>
<dbReference type="InterPro" id="IPR001594">
    <property type="entry name" value="Palmitoyltrfase_DHHC"/>
</dbReference>
<dbReference type="InterPro" id="IPR039859">
    <property type="entry name" value="PFA4/ZDH16/20/ERF2-like"/>
</dbReference>
<dbReference type="PANTHER" id="PTHR22883:SF488">
    <property type="entry name" value="PALMITOYLTRANSFERASE"/>
    <property type="match status" value="1"/>
</dbReference>
<dbReference type="PANTHER" id="PTHR22883">
    <property type="entry name" value="ZINC FINGER DHHC DOMAIN CONTAINING PROTEIN"/>
    <property type="match status" value="1"/>
</dbReference>
<dbReference type="Pfam" id="PF01529">
    <property type="entry name" value="DHHC"/>
    <property type="match status" value="1"/>
</dbReference>
<dbReference type="PROSITE" id="PS50216">
    <property type="entry name" value="DHHC"/>
    <property type="match status" value="1"/>
</dbReference>
<comment type="function">
    <text evidence="1">Palmitoyltransferase that targets several endosomal SNAREs. Palmitoylates the SNAREs at cysteine residues close to the cytoplasmic end of their transmembrane domain. May have a role in the cellular quality control of transmembrane domain-containing proteins (By similarity).</text>
</comment>
<comment type="catalytic activity">
    <reaction>
        <text>L-cysteinyl-[protein] + hexadecanoyl-CoA = S-hexadecanoyl-L-cysteinyl-[protein] + CoA</text>
        <dbReference type="Rhea" id="RHEA:36683"/>
        <dbReference type="Rhea" id="RHEA-COMP:10131"/>
        <dbReference type="Rhea" id="RHEA-COMP:11032"/>
        <dbReference type="ChEBI" id="CHEBI:29950"/>
        <dbReference type="ChEBI" id="CHEBI:57287"/>
        <dbReference type="ChEBI" id="CHEBI:57379"/>
        <dbReference type="ChEBI" id="CHEBI:74151"/>
        <dbReference type="EC" id="2.3.1.225"/>
    </reaction>
</comment>
<comment type="subcellular location">
    <subcellularLocation>
        <location evidence="1">Endoplasmic reticulum membrane</location>
        <topology evidence="1">Multi-pass membrane protein</topology>
    </subcellularLocation>
</comment>
<comment type="domain">
    <text evidence="1">The DHHC domain is required for palmitoyltransferase activity.</text>
</comment>
<comment type="similarity">
    <text evidence="4">Belongs to the DHHC palmitoyltransferase family. SWF1 subfamily.</text>
</comment>
<reference key="1">
    <citation type="journal article" date="2004" name="Nature">
        <title>Genome evolution in yeasts.</title>
        <authorList>
            <person name="Dujon B."/>
            <person name="Sherman D."/>
            <person name="Fischer G."/>
            <person name="Durrens P."/>
            <person name="Casaregola S."/>
            <person name="Lafontaine I."/>
            <person name="de Montigny J."/>
            <person name="Marck C."/>
            <person name="Neuveglise C."/>
            <person name="Talla E."/>
            <person name="Goffard N."/>
            <person name="Frangeul L."/>
            <person name="Aigle M."/>
            <person name="Anthouard V."/>
            <person name="Babour A."/>
            <person name="Barbe V."/>
            <person name="Barnay S."/>
            <person name="Blanchin S."/>
            <person name="Beckerich J.-M."/>
            <person name="Beyne E."/>
            <person name="Bleykasten C."/>
            <person name="Boisrame A."/>
            <person name="Boyer J."/>
            <person name="Cattolico L."/>
            <person name="Confanioleri F."/>
            <person name="de Daruvar A."/>
            <person name="Despons L."/>
            <person name="Fabre E."/>
            <person name="Fairhead C."/>
            <person name="Ferry-Dumazet H."/>
            <person name="Groppi A."/>
            <person name="Hantraye F."/>
            <person name="Hennequin C."/>
            <person name="Jauniaux N."/>
            <person name="Joyet P."/>
            <person name="Kachouri R."/>
            <person name="Kerrest A."/>
            <person name="Koszul R."/>
            <person name="Lemaire M."/>
            <person name="Lesur I."/>
            <person name="Ma L."/>
            <person name="Muller H."/>
            <person name="Nicaud J.-M."/>
            <person name="Nikolski M."/>
            <person name="Oztas S."/>
            <person name="Ozier-Kalogeropoulos O."/>
            <person name="Pellenz S."/>
            <person name="Potier S."/>
            <person name="Richard G.-F."/>
            <person name="Straub M.-L."/>
            <person name="Suleau A."/>
            <person name="Swennen D."/>
            <person name="Tekaia F."/>
            <person name="Wesolowski-Louvel M."/>
            <person name="Westhof E."/>
            <person name="Wirth B."/>
            <person name="Zeniou-Meyer M."/>
            <person name="Zivanovic Y."/>
            <person name="Bolotin-Fukuhara M."/>
            <person name="Thierry A."/>
            <person name="Bouchier C."/>
            <person name="Caudron B."/>
            <person name="Scarpelli C."/>
            <person name="Gaillardin C."/>
            <person name="Weissenbach J."/>
            <person name="Wincker P."/>
            <person name="Souciet J.-L."/>
        </authorList>
    </citation>
    <scope>NUCLEOTIDE SEQUENCE [LARGE SCALE GENOMIC DNA]</scope>
    <source>
        <strain>CLIB 122 / E 150</strain>
    </source>
</reference>
<gene>
    <name type="primary">SWF1</name>
    <name type="ordered locus">YALI0B01606g</name>
</gene>